<evidence type="ECO:0000255" key="1">
    <source>
        <dbReference type="HAMAP-Rule" id="MF_00347"/>
    </source>
</evidence>
<evidence type="ECO:0000256" key="2">
    <source>
        <dbReference type="SAM" id="MobiDB-lite"/>
    </source>
</evidence>
<dbReference type="EC" id="2.7.4.1" evidence="1"/>
<dbReference type="EMBL" id="Z99263">
    <property type="protein sequence ID" value="CAB16451.1"/>
    <property type="molecule type" value="Genomic_DNA"/>
</dbReference>
<dbReference type="EMBL" id="AL583923">
    <property type="protein sequence ID" value="CAC30634.1"/>
    <property type="molecule type" value="Genomic_DNA"/>
</dbReference>
<dbReference type="PIR" id="T45429">
    <property type="entry name" value="T45429"/>
</dbReference>
<dbReference type="RefSeq" id="NP_302155.1">
    <property type="nucleotide sequence ID" value="NC_002677.1"/>
</dbReference>
<dbReference type="RefSeq" id="WP_010908476.1">
    <property type="nucleotide sequence ID" value="NC_002677.1"/>
</dbReference>
<dbReference type="SMR" id="O33127"/>
<dbReference type="STRING" id="272631.gene:17575524"/>
<dbReference type="KEGG" id="mle:ML1681"/>
<dbReference type="PATRIC" id="fig|272631.5.peg.3173"/>
<dbReference type="Leproma" id="ML1681"/>
<dbReference type="eggNOG" id="COG0855">
    <property type="taxonomic scope" value="Bacteria"/>
</dbReference>
<dbReference type="HOGENOM" id="CLU_009678_5_0_11"/>
<dbReference type="OrthoDB" id="9761456at2"/>
<dbReference type="Proteomes" id="UP000000806">
    <property type="component" value="Chromosome"/>
</dbReference>
<dbReference type="GO" id="GO:0009358">
    <property type="term" value="C:polyphosphate kinase complex"/>
    <property type="evidence" value="ECO:0007669"/>
    <property type="project" value="InterPro"/>
</dbReference>
<dbReference type="GO" id="GO:0005524">
    <property type="term" value="F:ATP binding"/>
    <property type="evidence" value="ECO:0007669"/>
    <property type="project" value="UniProtKB-KW"/>
</dbReference>
<dbReference type="GO" id="GO:0046872">
    <property type="term" value="F:metal ion binding"/>
    <property type="evidence" value="ECO:0007669"/>
    <property type="project" value="UniProtKB-KW"/>
</dbReference>
<dbReference type="GO" id="GO:0008976">
    <property type="term" value="F:polyphosphate kinase activity"/>
    <property type="evidence" value="ECO:0007669"/>
    <property type="project" value="UniProtKB-UniRule"/>
</dbReference>
<dbReference type="GO" id="GO:0006799">
    <property type="term" value="P:polyphosphate biosynthetic process"/>
    <property type="evidence" value="ECO:0007669"/>
    <property type="project" value="UniProtKB-UniRule"/>
</dbReference>
<dbReference type="CDD" id="cd09165">
    <property type="entry name" value="PLDc_PaPPK1_C1_like"/>
    <property type="match status" value="1"/>
</dbReference>
<dbReference type="FunFam" id="1.20.58.310:FF:000002">
    <property type="entry name" value="Polyphosphate kinase"/>
    <property type="match status" value="1"/>
</dbReference>
<dbReference type="FunFam" id="3.30.1840.10:FF:000002">
    <property type="entry name" value="Polyphosphate kinase"/>
    <property type="match status" value="1"/>
</dbReference>
<dbReference type="FunFam" id="3.30.870.10:FF:000001">
    <property type="entry name" value="Polyphosphate kinase"/>
    <property type="match status" value="1"/>
</dbReference>
<dbReference type="Gene3D" id="3.30.870.10">
    <property type="entry name" value="Endonuclease Chain A"/>
    <property type="match status" value="2"/>
</dbReference>
<dbReference type="Gene3D" id="3.30.1840.10">
    <property type="entry name" value="Polyphosphate kinase middle domain"/>
    <property type="match status" value="1"/>
</dbReference>
<dbReference type="Gene3D" id="1.20.58.310">
    <property type="entry name" value="Polyphosphate kinase N-terminal domain"/>
    <property type="match status" value="1"/>
</dbReference>
<dbReference type="HAMAP" id="MF_00347">
    <property type="entry name" value="Polyphosphate_kinase"/>
    <property type="match status" value="1"/>
</dbReference>
<dbReference type="InterPro" id="IPR003414">
    <property type="entry name" value="PP_kinase"/>
</dbReference>
<dbReference type="InterPro" id="IPR041108">
    <property type="entry name" value="PP_kinase_C_1"/>
</dbReference>
<dbReference type="InterPro" id="IPR024953">
    <property type="entry name" value="PP_kinase_middle"/>
</dbReference>
<dbReference type="InterPro" id="IPR036830">
    <property type="entry name" value="PP_kinase_middle_dom_sf"/>
</dbReference>
<dbReference type="InterPro" id="IPR025200">
    <property type="entry name" value="PPK_C_dom2"/>
</dbReference>
<dbReference type="InterPro" id="IPR025198">
    <property type="entry name" value="PPK_N_dom"/>
</dbReference>
<dbReference type="InterPro" id="IPR036832">
    <property type="entry name" value="PPK_N_dom_sf"/>
</dbReference>
<dbReference type="NCBIfam" id="TIGR03705">
    <property type="entry name" value="poly_P_kin"/>
    <property type="match status" value="1"/>
</dbReference>
<dbReference type="NCBIfam" id="NF003917">
    <property type="entry name" value="PRK05443.1-1"/>
    <property type="match status" value="1"/>
</dbReference>
<dbReference type="NCBIfam" id="NF003918">
    <property type="entry name" value="PRK05443.1-2"/>
    <property type="match status" value="1"/>
</dbReference>
<dbReference type="NCBIfam" id="NF003921">
    <property type="entry name" value="PRK05443.2-2"/>
    <property type="match status" value="1"/>
</dbReference>
<dbReference type="NCBIfam" id="NF003922">
    <property type="entry name" value="PRK05443.2-3"/>
    <property type="match status" value="1"/>
</dbReference>
<dbReference type="PANTHER" id="PTHR30218">
    <property type="entry name" value="POLYPHOSPHATE KINASE"/>
    <property type="match status" value="1"/>
</dbReference>
<dbReference type="PANTHER" id="PTHR30218:SF0">
    <property type="entry name" value="POLYPHOSPHATE KINASE"/>
    <property type="match status" value="1"/>
</dbReference>
<dbReference type="Pfam" id="PF02503">
    <property type="entry name" value="PP_kinase"/>
    <property type="match status" value="1"/>
</dbReference>
<dbReference type="Pfam" id="PF13090">
    <property type="entry name" value="PP_kinase_C"/>
    <property type="match status" value="1"/>
</dbReference>
<dbReference type="Pfam" id="PF17941">
    <property type="entry name" value="PP_kinase_C_1"/>
    <property type="match status" value="1"/>
</dbReference>
<dbReference type="Pfam" id="PF13089">
    <property type="entry name" value="PP_kinase_N"/>
    <property type="match status" value="1"/>
</dbReference>
<dbReference type="PIRSF" id="PIRSF015589">
    <property type="entry name" value="PP_kinase"/>
    <property type="match status" value="1"/>
</dbReference>
<dbReference type="SUPFAM" id="SSF56024">
    <property type="entry name" value="Phospholipase D/nuclease"/>
    <property type="match status" value="2"/>
</dbReference>
<dbReference type="SUPFAM" id="SSF143724">
    <property type="entry name" value="PHP14-like"/>
    <property type="match status" value="1"/>
</dbReference>
<dbReference type="SUPFAM" id="SSF140356">
    <property type="entry name" value="PPK N-terminal domain-like"/>
    <property type="match status" value="1"/>
</dbReference>
<proteinExistence type="inferred from homology"/>
<comment type="function">
    <text evidence="1">Catalyzes the reversible transfer of the terminal phosphate of ATP to form a long-chain polyphosphate (polyP).</text>
</comment>
<comment type="catalytic activity">
    <reaction evidence="1">
        <text>[phosphate](n) + ATP = [phosphate](n+1) + ADP</text>
        <dbReference type="Rhea" id="RHEA:19573"/>
        <dbReference type="Rhea" id="RHEA-COMP:9859"/>
        <dbReference type="Rhea" id="RHEA-COMP:14280"/>
        <dbReference type="ChEBI" id="CHEBI:16838"/>
        <dbReference type="ChEBI" id="CHEBI:30616"/>
        <dbReference type="ChEBI" id="CHEBI:456216"/>
        <dbReference type="EC" id="2.7.4.1"/>
    </reaction>
</comment>
<comment type="cofactor">
    <cofactor evidence="1">
        <name>Mg(2+)</name>
        <dbReference type="ChEBI" id="CHEBI:18420"/>
    </cofactor>
</comment>
<comment type="PTM">
    <text evidence="1">An intermediate of this reaction is the autophosphorylated ppk in which a phosphate is covalently linked to a histidine residue through a N-P bond.</text>
</comment>
<comment type="similarity">
    <text evidence="1">Belongs to the polyphosphate kinase 1 (PPK1) family.</text>
</comment>
<protein>
    <recommendedName>
        <fullName evidence="1">Polyphosphate kinase</fullName>
        <ecNumber evidence="1">2.7.4.1</ecNumber>
    </recommendedName>
    <alternativeName>
        <fullName evidence="1">ATP-polyphosphate phosphotransferase</fullName>
    </alternativeName>
    <alternativeName>
        <fullName evidence="1">Polyphosphoric acid kinase</fullName>
    </alternativeName>
</protein>
<keyword id="KW-0067">ATP-binding</keyword>
<keyword id="KW-0418">Kinase</keyword>
<keyword id="KW-0460">Magnesium</keyword>
<keyword id="KW-0479">Metal-binding</keyword>
<keyword id="KW-0547">Nucleotide-binding</keyword>
<keyword id="KW-0597">Phosphoprotein</keyword>
<keyword id="KW-1185">Reference proteome</keyword>
<keyword id="KW-0808">Transferase</keyword>
<reference key="1">
    <citation type="journal article" date="2001" name="Nature">
        <title>Massive gene decay in the leprosy bacillus.</title>
        <authorList>
            <person name="Cole S.T."/>
            <person name="Eiglmeier K."/>
            <person name="Parkhill J."/>
            <person name="James K.D."/>
            <person name="Thomson N.R."/>
            <person name="Wheeler P.R."/>
            <person name="Honore N."/>
            <person name="Garnier T."/>
            <person name="Churcher C.M."/>
            <person name="Harris D.E."/>
            <person name="Mungall K.L."/>
            <person name="Basham D."/>
            <person name="Brown D."/>
            <person name="Chillingworth T."/>
            <person name="Connor R."/>
            <person name="Davies R.M."/>
            <person name="Devlin K."/>
            <person name="Duthoy S."/>
            <person name="Feltwell T."/>
            <person name="Fraser A."/>
            <person name="Hamlin N."/>
            <person name="Holroyd S."/>
            <person name="Hornsby T."/>
            <person name="Jagels K."/>
            <person name="Lacroix C."/>
            <person name="Maclean J."/>
            <person name="Moule S."/>
            <person name="Murphy L.D."/>
            <person name="Oliver K."/>
            <person name="Quail M.A."/>
            <person name="Rajandream M.A."/>
            <person name="Rutherford K.M."/>
            <person name="Rutter S."/>
            <person name="Seeger K."/>
            <person name="Simon S."/>
            <person name="Simmonds M."/>
            <person name="Skelton J."/>
            <person name="Squares R."/>
            <person name="Squares S."/>
            <person name="Stevens K."/>
            <person name="Taylor K."/>
            <person name="Whitehead S."/>
            <person name="Woodward J.R."/>
            <person name="Barrell B.G."/>
        </authorList>
    </citation>
    <scope>NUCLEOTIDE SEQUENCE [LARGE SCALE GENOMIC DNA]</scope>
    <source>
        <strain>TN</strain>
    </source>
</reference>
<accession>O33127</accession>
<organism>
    <name type="scientific">Mycobacterium leprae (strain TN)</name>
    <dbReference type="NCBI Taxonomy" id="272631"/>
    <lineage>
        <taxon>Bacteria</taxon>
        <taxon>Bacillati</taxon>
        <taxon>Actinomycetota</taxon>
        <taxon>Actinomycetes</taxon>
        <taxon>Mycobacteriales</taxon>
        <taxon>Mycobacteriaceae</taxon>
        <taxon>Mycobacterium</taxon>
    </lineage>
</organism>
<gene>
    <name evidence="1" type="primary">ppk</name>
    <name type="ordered locus">ML1681</name>
    <name type="ORF">MLCB637.36c</name>
</gene>
<sequence>MMSNDLLVTDIEAEARTEENIWHSDNSALAAPPAATTSASQDQLPDDRYLNRESSWLDFNARVLALAADNSLPLLERAKFLAIFASNLDEFYMVRVAGLKRRDEMDLSVRSADGLTPREQLSRIGEQTQWIASRHARVFLDSVLPALGEEGIYIVTWTDLDQAERDQLSTYFNEQVFPVLTPLAVDPAHPFPFVSGLSLNLAVTVKQPEDGTQHFARVKVPNNVDRFVELANRGAVRDTSAGDEGQLIHRFLPMEELIAAFLPVLFPGTEIVEHHAFRITRNADFEVEEDRDEDLLQALERELARRRFGSPVRLEIADDMTESMLELLLRELDVHPSDVIEVPGLLDLSSLWQIYGLDRPALKDRAFIPDTHPAFAERETPKSIFATLREGDVLVHHPYHSFATSVQRFIEQATADPDVLAIKQTLYRTSGDSPIVLALIEAAEAGKQVVALVEIKARFDEQANIRWARALEHAGVHVVYGIVGLKTHCKTCLVVRREGPTIRRYCHIGTGNYNSKTARLYEDVGLLTAAPDIGADLTDLFNSLTGYSRKLAYRNLLVAPYGIRRGIIERVEREVAAHRESGPQTGKGLIRLKMNALVDEQVIDALYRASQAGVRVEVVVRGICALRPGTEGFSENIFVRSILGRFLEHSRIIHFRAIDEFWIGSADMMHRNLDRRVEVLAQVKDSRLTAQLDELLKSALDPFTRCWELRPDGQWTASPQKGQQVRDHQESLMERHRSR</sequence>
<feature type="chain" id="PRO_0000128647" description="Polyphosphate kinase">
    <location>
        <begin position="1"/>
        <end position="739"/>
    </location>
</feature>
<feature type="region of interest" description="Disordered" evidence="2">
    <location>
        <begin position="22"/>
        <end position="45"/>
    </location>
</feature>
<feature type="region of interest" description="Disordered" evidence="2">
    <location>
        <begin position="714"/>
        <end position="739"/>
    </location>
</feature>
<feature type="compositionally biased region" description="Low complexity" evidence="2">
    <location>
        <begin position="27"/>
        <end position="40"/>
    </location>
</feature>
<feature type="compositionally biased region" description="Basic and acidic residues" evidence="2">
    <location>
        <begin position="724"/>
        <end position="739"/>
    </location>
</feature>
<feature type="active site" description="Phosphohistidine intermediate" evidence="1">
    <location>
        <position position="488"/>
    </location>
</feature>
<feature type="binding site" evidence="1">
    <location>
        <position position="87"/>
    </location>
    <ligand>
        <name>ATP</name>
        <dbReference type="ChEBI" id="CHEBI:30616"/>
    </ligand>
</feature>
<feature type="binding site" evidence="1">
    <location>
        <position position="428"/>
    </location>
    <ligand>
        <name>Mg(2+)</name>
        <dbReference type="ChEBI" id="CHEBI:18420"/>
    </ligand>
</feature>
<feature type="binding site" evidence="1">
    <location>
        <position position="458"/>
    </location>
    <ligand>
        <name>Mg(2+)</name>
        <dbReference type="ChEBI" id="CHEBI:18420"/>
    </ligand>
</feature>
<feature type="binding site" evidence="1">
    <location>
        <position position="521"/>
    </location>
    <ligand>
        <name>ATP</name>
        <dbReference type="ChEBI" id="CHEBI:30616"/>
    </ligand>
</feature>
<feature type="binding site" evidence="1">
    <location>
        <position position="621"/>
    </location>
    <ligand>
        <name>ATP</name>
        <dbReference type="ChEBI" id="CHEBI:30616"/>
    </ligand>
</feature>
<feature type="binding site" evidence="1">
    <location>
        <position position="649"/>
    </location>
    <ligand>
        <name>ATP</name>
        <dbReference type="ChEBI" id="CHEBI:30616"/>
    </ligand>
</feature>
<name>PPK1_MYCLE</name>